<organism>
    <name type="scientific">Geobacter metallireducens (strain ATCC 53774 / DSM 7210 / GS-15)</name>
    <dbReference type="NCBI Taxonomy" id="269799"/>
    <lineage>
        <taxon>Bacteria</taxon>
        <taxon>Pseudomonadati</taxon>
        <taxon>Thermodesulfobacteriota</taxon>
        <taxon>Desulfuromonadia</taxon>
        <taxon>Geobacterales</taxon>
        <taxon>Geobacteraceae</taxon>
        <taxon>Geobacter</taxon>
    </lineage>
</organism>
<evidence type="ECO:0000255" key="1">
    <source>
        <dbReference type="HAMAP-Rule" id="MF_01398"/>
    </source>
</evidence>
<sequence length="206" mass="22576">MANACKKKRLLKSVMMPAAVCAAVIGLSALGFAAEGGEGAHHVDTGKQMKDFMWRVIDFAALLGVIIWALKKANAKGALADRTANIEKALREAEEARAAAEKKFAEYSGKLEKANLEIDDIYAAIRKEAELEKERIIAEAKLTADKIREQAAATASQEVLKAKAELRGEAARLAVQMAEQSLRENIKKDDQDRLVNDYLTKVENLH</sequence>
<accession>Q39Q52</accession>
<name>ATPF_GEOMG</name>
<protein>
    <recommendedName>
        <fullName evidence="1">ATP synthase subunit b</fullName>
    </recommendedName>
    <alternativeName>
        <fullName evidence="1">ATP synthase F(0) sector subunit b</fullName>
    </alternativeName>
    <alternativeName>
        <fullName evidence="1">ATPase subunit I</fullName>
    </alternativeName>
    <alternativeName>
        <fullName evidence="1">F-type ATPase subunit b</fullName>
        <shortName evidence="1">F-ATPase subunit b</shortName>
    </alternativeName>
</protein>
<comment type="function">
    <text evidence="1">F(1)F(0) ATP synthase produces ATP from ADP in the presence of a proton or sodium gradient. F-type ATPases consist of two structural domains, F(1) containing the extramembraneous catalytic core and F(0) containing the membrane proton channel, linked together by a central stalk and a peripheral stalk. During catalysis, ATP synthesis in the catalytic domain of F(1) is coupled via a rotary mechanism of the central stalk subunits to proton translocation.</text>
</comment>
<comment type="function">
    <text evidence="1">Component of the F(0) channel, it forms part of the peripheral stalk, linking F(1) to F(0).</text>
</comment>
<comment type="subunit">
    <text evidence="1">F-type ATPases have 2 components, F(1) - the catalytic core - and F(0) - the membrane proton channel. F(1) has five subunits: alpha(3), beta(3), gamma(1), delta(1), epsilon(1). F(0) has three main subunits: a(1), b(2) and c(10-14). The alpha and beta chains form an alternating ring which encloses part of the gamma chain. F(1) is attached to F(0) by a central stalk formed by the gamma and epsilon chains, while a peripheral stalk is formed by the delta and b chains.</text>
</comment>
<comment type="subcellular location">
    <subcellularLocation>
        <location evidence="1">Cell inner membrane</location>
        <topology evidence="1">Single-pass membrane protein</topology>
    </subcellularLocation>
</comment>
<comment type="similarity">
    <text evidence="1">Belongs to the ATPase B chain family.</text>
</comment>
<keyword id="KW-0066">ATP synthesis</keyword>
<keyword id="KW-0997">Cell inner membrane</keyword>
<keyword id="KW-1003">Cell membrane</keyword>
<keyword id="KW-0138">CF(0)</keyword>
<keyword id="KW-0375">Hydrogen ion transport</keyword>
<keyword id="KW-0406">Ion transport</keyword>
<keyword id="KW-0472">Membrane</keyword>
<keyword id="KW-1185">Reference proteome</keyword>
<keyword id="KW-0812">Transmembrane</keyword>
<keyword id="KW-1133">Transmembrane helix</keyword>
<keyword id="KW-0813">Transport</keyword>
<proteinExistence type="inferred from homology"/>
<reference key="1">
    <citation type="journal article" date="2009" name="BMC Microbiol.">
        <title>The genome sequence of Geobacter metallireducens: features of metabolism, physiology and regulation common and dissimilar to Geobacter sulfurreducens.</title>
        <authorList>
            <person name="Aklujkar M."/>
            <person name="Krushkal J."/>
            <person name="DiBartolo G."/>
            <person name="Lapidus A."/>
            <person name="Land M.L."/>
            <person name="Lovley D.R."/>
        </authorList>
    </citation>
    <scope>NUCLEOTIDE SEQUENCE [LARGE SCALE GENOMIC DNA]</scope>
    <source>
        <strain>ATCC 53774 / DSM 7210 / GS-15</strain>
    </source>
</reference>
<gene>
    <name evidence="1" type="primary">atpF</name>
    <name type="ordered locus">Gmet_3410</name>
</gene>
<dbReference type="EMBL" id="CP000148">
    <property type="protein sequence ID" value="ABB33622.1"/>
    <property type="molecule type" value="Genomic_DNA"/>
</dbReference>
<dbReference type="RefSeq" id="WP_004514217.1">
    <property type="nucleotide sequence ID" value="NC_007517.1"/>
</dbReference>
<dbReference type="SMR" id="Q39Q52"/>
<dbReference type="STRING" id="269799.Gmet_3410"/>
<dbReference type="KEGG" id="gme:Gmet_3410"/>
<dbReference type="eggNOG" id="COG0711">
    <property type="taxonomic scope" value="Bacteria"/>
</dbReference>
<dbReference type="HOGENOM" id="CLU_079215_3_2_7"/>
<dbReference type="Proteomes" id="UP000007073">
    <property type="component" value="Chromosome"/>
</dbReference>
<dbReference type="GO" id="GO:0005886">
    <property type="term" value="C:plasma membrane"/>
    <property type="evidence" value="ECO:0007669"/>
    <property type="project" value="UniProtKB-SubCell"/>
</dbReference>
<dbReference type="GO" id="GO:0045259">
    <property type="term" value="C:proton-transporting ATP synthase complex"/>
    <property type="evidence" value="ECO:0007669"/>
    <property type="project" value="UniProtKB-KW"/>
</dbReference>
<dbReference type="GO" id="GO:0046933">
    <property type="term" value="F:proton-transporting ATP synthase activity, rotational mechanism"/>
    <property type="evidence" value="ECO:0007669"/>
    <property type="project" value="UniProtKB-UniRule"/>
</dbReference>
<dbReference type="CDD" id="cd06503">
    <property type="entry name" value="ATP-synt_Fo_b"/>
    <property type="match status" value="1"/>
</dbReference>
<dbReference type="HAMAP" id="MF_01398">
    <property type="entry name" value="ATP_synth_b_bprime"/>
    <property type="match status" value="1"/>
</dbReference>
<dbReference type="InterPro" id="IPR002146">
    <property type="entry name" value="ATP_synth_b/b'su_bac/chlpt"/>
</dbReference>
<dbReference type="PANTHER" id="PTHR34264">
    <property type="entry name" value="ATP SYNTHASE SUBUNIT B, CHLOROPLASTIC"/>
    <property type="match status" value="1"/>
</dbReference>
<dbReference type="PANTHER" id="PTHR34264:SF3">
    <property type="entry name" value="ATP SYNTHASE SUBUNIT B, CHLOROPLASTIC"/>
    <property type="match status" value="1"/>
</dbReference>
<dbReference type="Pfam" id="PF00430">
    <property type="entry name" value="ATP-synt_B"/>
    <property type="match status" value="1"/>
</dbReference>
<feature type="chain" id="PRO_0000368502" description="ATP synthase subunit b">
    <location>
        <begin position="1"/>
        <end position="206"/>
    </location>
</feature>
<feature type="transmembrane region" description="Helical" evidence="1">
    <location>
        <begin position="14"/>
        <end position="34"/>
    </location>
</feature>